<gene>
    <name evidence="1" type="primary">ispD</name>
    <name type="ordered locus">BURPS1106A_2401</name>
</gene>
<accession>A3NWE0</accession>
<reference key="1">
    <citation type="journal article" date="2010" name="Genome Biol. Evol.">
        <title>Continuing evolution of Burkholderia mallei through genome reduction and large-scale rearrangements.</title>
        <authorList>
            <person name="Losada L."/>
            <person name="Ronning C.M."/>
            <person name="DeShazer D."/>
            <person name="Woods D."/>
            <person name="Fedorova N."/>
            <person name="Kim H.S."/>
            <person name="Shabalina S.A."/>
            <person name="Pearson T.R."/>
            <person name="Brinkac L."/>
            <person name="Tan P."/>
            <person name="Nandi T."/>
            <person name="Crabtree J."/>
            <person name="Badger J."/>
            <person name="Beckstrom-Sternberg S."/>
            <person name="Saqib M."/>
            <person name="Schutzer S.E."/>
            <person name="Keim P."/>
            <person name="Nierman W.C."/>
        </authorList>
    </citation>
    <scope>NUCLEOTIDE SEQUENCE [LARGE SCALE GENOMIC DNA]</scope>
    <source>
        <strain>1106a</strain>
    </source>
</reference>
<organism>
    <name type="scientific">Burkholderia pseudomallei (strain 1106a)</name>
    <dbReference type="NCBI Taxonomy" id="357348"/>
    <lineage>
        <taxon>Bacteria</taxon>
        <taxon>Pseudomonadati</taxon>
        <taxon>Pseudomonadota</taxon>
        <taxon>Betaproteobacteria</taxon>
        <taxon>Burkholderiales</taxon>
        <taxon>Burkholderiaceae</taxon>
        <taxon>Burkholderia</taxon>
        <taxon>pseudomallei group</taxon>
    </lineage>
</organism>
<feature type="chain" id="PRO_1000022907" description="2-C-methyl-D-erythritol 4-phosphate cytidylyltransferase">
    <location>
        <begin position="1"/>
        <end position="236"/>
    </location>
</feature>
<feature type="site" description="Transition state stabilizer" evidence="1">
    <location>
        <position position="17"/>
    </location>
</feature>
<feature type="site" description="Transition state stabilizer" evidence="1">
    <location>
        <position position="24"/>
    </location>
</feature>
<feature type="site" description="Positions MEP for the nucleophilic attack" evidence="1">
    <location>
        <position position="159"/>
    </location>
</feature>
<feature type="site" description="Positions MEP for the nucleophilic attack" evidence="1">
    <location>
        <position position="215"/>
    </location>
</feature>
<protein>
    <recommendedName>
        <fullName evidence="1">2-C-methyl-D-erythritol 4-phosphate cytidylyltransferase</fullName>
        <ecNumber evidence="1">2.7.7.60</ecNumber>
    </recommendedName>
    <alternativeName>
        <fullName evidence="1">4-diphosphocytidyl-2C-methyl-D-erythritol synthase</fullName>
    </alternativeName>
    <alternativeName>
        <fullName evidence="1">MEP cytidylyltransferase</fullName>
        <shortName evidence="1">MCT</shortName>
    </alternativeName>
</protein>
<comment type="function">
    <text evidence="1">Catalyzes the formation of 4-diphosphocytidyl-2-C-methyl-D-erythritol from CTP and 2-C-methyl-D-erythritol 4-phosphate (MEP).</text>
</comment>
<comment type="catalytic activity">
    <reaction evidence="1">
        <text>2-C-methyl-D-erythritol 4-phosphate + CTP + H(+) = 4-CDP-2-C-methyl-D-erythritol + diphosphate</text>
        <dbReference type="Rhea" id="RHEA:13429"/>
        <dbReference type="ChEBI" id="CHEBI:15378"/>
        <dbReference type="ChEBI" id="CHEBI:33019"/>
        <dbReference type="ChEBI" id="CHEBI:37563"/>
        <dbReference type="ChEBI" id="CHEBI:57823"/>
        <dbReference type="ChEBI" id="CHEBI:58262"/>
        <dbReference type="EC" id="2.7.7.60"/>
    </reaction>
</comment>
<comment type="pathway">
    <text evidence="1">Isoprenoid biosynthesis; isopentenyl diphosphate biosynthesis via DXP pathway; isopentenyl diphosphate from 1-deoxy-D-xylulose 5-phosphate: step 2/6.</text>
</comment>
<comment type="similarity">
    <text evidence="1">Belongs to the IspD/TarI cytidylyltransferase family. IspD subfamily.</text>
</comment>
<sequence length="236" mass="25379">MTSRLFALIPCAGTGSRSGSALPKQYRTLAGRALLHYTLAAFDACSEFAQTLVVISPDDAHFDARRFAGLRFAVRRCGGASRQASVMNGLIQLAEFGATDADWVLVHDAARPGITPALIRTLIGALKDDPVGGIVALPVADTLKRVPAGGDAIERTESRNGLWQAQTPQMFRIGMLRDAIRRAQLDGHDLTDEASAIEWAGHTPRVVQGSLRNFKVTYPEDFDLAEAILAQPARAS</sequence>
<dbReference type="EC" id="2.7.7.60" evidence="1"/>
<dbReference type="EMBL" id="CP000572">
    <property type="protein sequence ID" value="ABN91719.1"/>
    <property type="molecule type" value="Genomic_DNA"/>
</dbReference>
<dbReference type="RefSeq" id="WP_004191584.1">
    <property type="nucleotide sequence ID" value="NC_009076.1"/>
</dbReference>
<dbReference type="SMR" id="A3NWE0"/>
<dbReference type="GeneID" id="93060628"/>
<dbReference type="KEGG" id="bpl:BURPS1106A_2401"/>
<dbReference type="HOGENOM" id="CLU_061281_3_0_4"/>
<dbReference type="UniPathway" id="UPA00056">
    <property type="reaction ID" value="UER00093"/>
</dbReference>
<dbReference type="Proteomes" id="UP000006738">
    <property type="component" value="Chromosome I"/>
</dbReference>
<dbReference type="GO" id="GO:0050518">
    <property type="term" value="F:2-C-methyl-D-erythritol 4-phosphate cytidylyltransferase activity"/>
    <property type="evidence" value="ECO:0007669"/>
    <property type="project" value="UniProtKB-UniRule"/>
</dbReference>
<dbReference type="GO" id="GO:0019288">
    <property type="term" value="P:isopentenyl diphosphate biosynthetic process, methylerythritol 4-phosphate pathway"/>
    <property type="evidence" value="ECO:0007669"/>
    <property type="project" value="UniProtKB-UniRule"/>
</dbReference>
<dbReference type="CDD" id="cd02516">
    <property type="entry name" value="CDP-ME_synthetase"/>
    <property type="match status" value="1"/>
</dbReference>
<dbReference type="FunFam" id="3.90.550.10:FF:000003">
    <property type="entry name" value="2-C-methyl-D-erythritol 4-phosphate cytidylyltransferase"/>
    <property type="match status" value="1"/>
</dbReference>
<dbReference type="Gene3D" id="3.90.550.10">
    <property type="entry name" value="Spore Coat Polysaccharide Biosynthesis Protein SpsA, Chain A"/>
    <property type="match status" value="1"/>
</dbReference>
<dbReference type="HAMAP" id="MF_00108">
    <property type="entry name" value="IspD"/>
    <property type="match status" value="1"/>
</dbReference>
<dbReference type="InterPro" id="IPR001228">
    <property type="entry name" value="IspD"/>
</dbReference>
<dbReference type="InterPro" id="IPR034683">
    <property type="entry name" value="IspD/TarI"/>
</dbReference>
<dbReference type="InterPro" id="IPR050088">
    <property type="entry name" value="IspD/TarI_cytidylyltransf_bact"/>
</dbReference>
<dbReference type="InterPro" id="IPR018294">
    <property type="entry name" value="ISPD_synthase_CS"/>
</dbReference>
<dbReference type="InterPro" id="IPR029044">
    <property type="entry name" value="Nucleotide-diphossugar_trans"/>
</dbReference>
<dbReference type="NCBIfam" id="TIGR00453">
    <property type="entry name" value="ispD"/>
    <property type="match status" value="1"/>
</dbReference>
<dbReference type="PANTHER" id="PTHR32125">
    <property type="entry name" value="2-C-METHYL-D-ERYTHRITOL 4-PHOSPHATE CYTIDYLYLTRANSFERASE, CHLOROPLASTIC"/>
    <property type="match status" value="1"/>
</dbReference>
<dbReference type="PANTHER" id="PTHR32125:SF4">
    <property type="entry name" value="2-C-METHYL-D-ERYTHRITOL 4-PHOSPHATE CYTIDYLYLTRANSFERASE, CHLOROPLASTIC"/>
    <property type="match status" value="1"/>
</dbReference>
<dbReference type="Pfam" id="PF01128">
    <property type="entry name" value="IspD"/>
    <property type="match status" value="1"/>
</dbReference>
<dbReference type="SUPFAM" id="SSF53448">
    <property type="entry name" value="Nucleotide-diphospho-sugar transferases"/>
    <property type="match status" value="1"/>
</dbReference>
<dbReference type="PROSITE" id="PS01295">
    <property type="entry name" value="ISPD"/>
    <property type="match status" value="1"/>
</dbReference>
<keyword id="KW-0414">Isoprene biosynthesis</keyword>
<keyword id="KW-0548">Nucleotidyltransferase</keyword>
<keyword id="KW-0808">Transferase</keyword>
<evidence type="ECO:0000255" key="1">
    <source>
        <dbReference type="HAMAP-Rule" id="MF_00108"/>
    </source>
</evidence>
<proteinExistence type="inferred from homology"/>
<name>ISPD_BURP0</name>